<name>ALBA2_METKA</name>
<protein>
    <recommendedName>
        <fullName evidence="1">DNA/RNA-binding protein Alba 2</fullName>
    </recommendedName>
</protein>
<feature type="chain" id="PRO_0000151700" description="DNA/RNA-binding protein Alba 2">
    <location>
        <begin position="1"/>
        <end position="93"/>
    </location>
</feature>
<accession>Q8TWE6</accession>
<organism>
    <name type="scientific">Methanopyrus kandleri (strain AV19 / DSM 6324 / JCM 9639 / NBRC 100938)</name>
    <dbReference type="NCBI Taxonomy" id="190192"/>
    <lineage>
        <taxon>Archaea</taxon>
        <taxon>Methanobacteriati</taxon>
        <taxon>Methanobacteriota</taxon>
        <taxon>Methanomada group</taxon>
        <taxon>Methanopyri</taxon>
        <taxon>Methanopyrales</taxon>
        <taxon>Methanopyraceae</taxon>
        <taxon>Methanopyrus</taxon>
    </lineage>
</organism>
<keyword id="KW-0158">Chromosome</keyword>
<keyword id="KW-0963">Cytoplasm</keyword>
<keyword id="KW-0226">DNA condensation</keyword>
<keyword id="KW-0238">DNA-binding</keyword>
<keyword id="KW-1185">Reference proteome</keyword>
<dbReference type="EMBL" id="AE009439">
    <property type="protein sequence ID" value="AAM02302.1"/>
    <property type="molecule type" value="Genomic_DNA"/>
</dbReference>
<dbReference type="RefSeq" id="WP_011019457.1">
    <property type="nucleotide sequence ID" value="NC_003551.1"/>
</dbReference>
<dbReference type="SMR" id="Q8TWE6"/>
<dbReference type="STRING" id="190192.MK1089"/>
<dbReference type="PaxDb" id="190192-MK1089"/>
<dbReference type="EnsemblBacteria" id="AAM02302">
    <property type="protein sequence ID" value="AAM02302"/>
    <property type="gene ID" value="MK1089"/>
</dbReference>
<dbReference type="GeneID" id="1477190"/>
<dbReference type="KEGG" id="mka:MK1089"/>
<dbReference type="PATRIC" id="fig|190192.8.peg.1144"/>
<dbReference type="HOGENOM" id="CLU_110989_1_0_2"/>
<dbReference type="InParanoid" id="Q8TWE6"/>
<dbReference type="OrthoDB" id="10360at2157"/>
<dbReference type="Proteomes" id="UP000001826">
    <property type="component" value="Chromosome"/>
</dbReference>
<dbReference type="GO" id="GO:0005694">
    <property type="term" value="C:chromosome"/>
    <property type="evidence" value="ECO:0007669"/>
    <property type="project" value="UniProtKB-SubCell"/>
</dbReference>
<dbReference type="GO" id="GO:0005737">
    <property type="term" value="C:cytoplasm"/>
    <property type="evidence" value="ECO:0007669"/>
    <property type="project" value="UniProtKB-SubCell"/>
</dbReference>
<dbReference type="GO" id="GO:0003690">
    <property type="term" value="F:double-stranded DNA binding"/>
    <property type="evidence" value="ECO:0007669"/>
    <property type="project" value="UniProtKB-UniRule"/>
</dbReference>
<dbReference type="GO" id="GO:0003723">
    <property type="term" value="F:RNA binding"/>
    <property type="evidence" value="ECO:0007669"/>
    <property type="project" value="InterPro"/>
</dbReference>
<dbReference type="GO" id="GO:0030261">
    <property type="term" value="P:chromosome condensation"/>
    <property type="evidence" value="ECO:0007669"/>
    <property type="project" value="UniProtKB-KW"/>
</dbReference>
<dbReference type="Gene3D" id="3.30.110.20">
    <property type="entry name" value="Alba-like domain"/>
    <property type="match status" value="1"/>
</dbReference>
<dbReference type="HAMAP" id="MF_01122">
    <property type="entry name" value="AlbA"/>
    <property type="match status" value="1"/>
</dbReference>
<dbReference type="InterPro" id="IPR036882">
    <property type="entry name" value="Alba-like_dom_sf"/>
</dbReference>
<dbReference type="InterPro" id="IPR013795">
    <property type="entry name" value="DNA/RNA-bd_Alba"/>
</dbReference>
<dbReference type="InterPro" id="IPR002775">
    <property type="entry name" value="DNA/RNA-bd_Alba-like"/>
</dbReference>
<dbReference type="NCBIfam" id="TIGR00285">
    <property type="entry name" value="DNA-binding protein Alba"/>
    <property type="match status" value="1"/>
</dbReference>
<dbReference type="NCBIfam" id="NF003088">
    <property type="entry name" value="PRK04015.1"/>
    <property type="match status" value="1"/>
</dbReference>
<dbReference type="Pfam" id="PF01918">
    <property type="entry name" value="Alba"/>
    <property type="match status" value="1"/>
</dbReference>
<dbReference type="PIRSF" id="PIRSF028732">
    <property type="entry name" value="Alba"/>
    <property type="match status" value="1"/>
</dbReference>
<dbReference type="SUPFAM" id="SSF82704">
    <property type="entry name" value="AlbA-like"/>
    <property type="match status" value="1"/>
</dbReference>
<evidence type="ECO:0000255" key="1">
    <source>
        <dbReference type="HAMAP-Rule" id="MF_01122"/>
    </source>
</evidence>
<proteinExistence type="inferred from homology"/>
<reference key="1">
    <citation type="journal article" date="2002" name="Proc. Natl. Acad. Sci. U.S.A.">
        <title>The complete genome of hyperthermophile Methanopyrus kandleri AV19 and monophyly of archaeal methanogens.</title>
        <authorList>
            <person name="Slesarev A.I."/>
            <person name="Mezhevaya K.V."/>
            <person name="Makarova K.S."/>
            <person name="Polushin N.N."/>
            <person name="Shcherbinina O.V."/>
            <person name="Shakhova V.V."/>
            <person name="Belova G.I."/>
            <person name="Aravind L."/>
            <person name="Natale D.A."/>
            <person name="Rogozin I.B."/>
            <person name="Tatusov R.L."/>
            <person name="Wolf Y.I."/>
            <person name="Stetter K.O."/>
            <person name="Malykh A.G."/>
            <person name="Koonin E.V."/>
            <person name="Kozyavkin S.A."/>
        </authorList>
    </citation>
    <scope>NUCLEOTIDE SEQUENCE [LARGE SCALE GENOMIC DNA]</scope>
    <source>
        <strain>AV19 / DSM 6324 / JCM 9639 / NBRC 100938</strain>
    </source>
</reference>
<sequence>MAEENVIYVGNKPVTNYVLAVMTQFSEGADEVKLVARGRAISRAVDVAEFIRNNVMPEVEVKDIEIGTEEIETEEGDTISVSTIAITLAKPSE</sequence>
<comment type="function">
    <text evidence="1">Binds double-stranded DNA tightly but without sequence specificity. Involved in DNA compaction.</text>
</comment>
<comment type="subcellular location">
    <subcellularLocation>
        <location evidence="1">Cytoplasm</location>
    </subcellularLocation>
    <subcellularLocation>
        <location evidence="1">Chromosome</location>
    </subcellularLocation>
</comment>
<comment type="similarity">
    <text evidence="1">Belongs to the histone-like Alba family.</text>
</comment>
<gene>
    <name evidence="1" type="primary">albA2</name>
    <name type="ordered locus">MK1089</name>
</gene>